<protein>
    <recommendedName>
        <fullName evidence="1">Homoserine kinase</fullName>
        <shortName evidence="1">HK</shortName>
        <shortName evidence="1">HSK</shortName>
        <ecNumber evidence="1">2.7.1.39</ecNumber>
    </recommendedName>
</protein>
<comment type="catalytic activity">
    <reaction evidence="1">
        <text>L-homoserine + ATP = O-phospho-L-homoserine + ADP + H(+)</text>
        <dbReference type="Rhea" id="RHEA:13985"/>
        <dbReference type="ChEBI" id="CHEBI:15378"/>
        <dbReference type="ChEBI" id="CHEBI:30616"/>
        <dbReference type="ChEBI" id="CHEBI:57476"/>
        <dbReference type="ChEBI" id="CHEBI:57590"/>
        <dbReference type="ChEBI" id="CHEBI:456216"/>
        <dbReference type="EC" id="2.7.1.39"/>
    </reaction>
</comment>
<comment type="pathway">
    <text evidence="1">Amino-acid biosynthesis; L-threonine biosynthesis; L-threonine from L-aspartate: step 4/5.</text>
</comment>
<comment type="similarity">
    <text evidence="1">Belongs to the pseudomonas-type ThrB family.</text>
</comment>
<reference key="1">
    <citation type="journal article" date="2006" name="J. Bacteriol.">
        <title>Comparative genomic evidence for a close relationship between the dimorphic prosthecate bacteria Hyphomonas neptunium and Caulobacter crescentus.</title>
        <authorList>
            <person name="Badger J.H."/>
            <person name="Hoover T.R."/>
            <person name="Brun Y.V."/>
            <person name="Weiner R.M."/>
            <person name="Laub M.T."/>
            <person name="Alexandre G."/>
            <person name="Mrazek J."/>
            <person name="Ren Q."/>
            <person name="Paulsen I.T."/>
            <person name="Nelson K.E."/>
            <person name="Khouri H.M."/>
            <person name="Radune D."/>
            <person name="Sosa J."/>
            <person name="Dodson R.J."/>
            <person name="Sullivan S.A."/>
            <person name="Rosovitz M.J."/>
            <person name="Madupu R."/>
            <person name="Brinkac L.M."/>
            <person name="Durkin A.S."/>
            <person name="Daugherty S.C."/>
            <person name="Kothari S.P."/>
            <person name="Giglio M.G."/>
            <person name="Zhou L."/>
            <person name="Haft D.H."/>
            <person name="Selengut J.D."/>
            <person name="Davidsen T.M."/>
            <person name="Yang Q."/>
            <person name="Zafar N."/>
            <person name="Ward N.L."/>
        </authorList>
    </citation>
    <scope>NUCLEOTIDE SEQUENCE [LARGE SCALE GENOMIC DNA]</scope>
    <source>
        <strain>ATCC 15444</strain>
    </source>
</reference>
<organism>
    <name type="scientific">Hyphomonas neptunium (strain ATCC 15444)</name>
    <dbReference type="NCBI Taxonomy" id="228405"/>
    <lineage>
        <taxon>Bacteria</taxon>
        <taxon>Pseudomonadati</taxon>
        <taxon>Pseudomonadota</taxon>
        <taxon>Alphaproteobacteria</taxon>
        <taxon>Hyphomonadales</taxon>
        <taxon>Hyphomonadaceae</taxon>
        <taxon>Hyphomonas</taxon>
    </lineage>
</organism>
<dbReference type="EC" id="2.7.1.39" evidence="1"/>
<dbReference type="EMBL" id="CP000158">
    <property type="protein sequence ID" value="ABI76536.1"/>
    <property type="molecule type" value="Genomic_DNA"/>
</dbReference>
<dbReference type="RefSeq" id="WP_011645974.1">
    <property type="nucleotide sequence ID" value="NC_008358.1"/>
</dbReference>
<dbReference type="SMR" id="Q0C3L9"/>
<dbReference type="STRING" id="228405.HNE_0947"/>
<dbReference type="KEGG" id="hne:HNE_0947"/>
<dbReference type="eggNOG" id="COG2334">
    <property type="taxonomic scope" value="Bacteria"/>
</dbReference>
<dbReference type="HOGENOM" id="CLU_053300_0_0_5"/>
<dbReference type="UniPathway" id="UPA00050">
    <property type="reaction ID" value="UER00064"/>
</dbReference>
<dbReference type="Proteomes" id="UP000001959">
    <property type="component" value="Chromosome"/>
</dbReference>
<dbReference type="GO" id="GO:0005524">
    <property type="term" value="F:ATP binding"/>
    <property type="evidence" value="ECO:0007669"/>
    <property type="project" value="UniProtKB-KW"/>
</dbReference>
<dbReference type="GO" id="GO:0004413">
    <property type="term" value="F:homoserine kinase activity"/>
    <property type="evidence" value="ECO:0007669"/>
    <property type="project" value="UniProtKB-UniRule"/>
</dbReference>
<dbReference type="GO" id="GO:0009088">
    <property type="term" value="P:threonine biosynthetic process"/>
    <property type="evidence" value="ECO:0007669"/>
    <property type="project" value="UniProtKB-UniRule"/>
</dbReference>
<dbReference type="CDD" id="cd05153">
    <property type="entry name" value="HomoserineK_II"/>
    <property type="match status" value="1"/>
</dbReference>
<dbReference type="Gene3D" id="3.90.1200.10">
    <property type="match status" value="1"/>
</dbReference>
<dbReference type="Gene3D" id="3.30.200.20">
    <property type="entry name" value="Phosphorylase Kinase, domain 1"/>
    <property type="match status" value="1"/>
</dbReference>
<dbReference type="HAMAP" id="MF_00301">
    <property type="entry name" value="Homoser_kinase_2"/>
    <property type="match status" value="1"/>
</dbReference>
<dbReference type="InterPro" id="IPR002575">
    <property type="entry name" value="Aminoglycoside_PTrfase"/>
</dbReference>
<dbReference type="InterPro" id="IPR005280">
    <property type="entry name" value="Homoserine_kinase_II"/>
</dbReference>
<dbReference type="InterPro" id="IPR011009">
    <property type="entry name" value="Kinase-like_dom_sf"/>
</dbReference>
<dbReference type="InterPro" id="IPR050249">
    <property type="entry name" value="Pseudomonas-type_ThrB"/>
</dbReference>
<dbReference type="NCBIfam" id="NF003558">
    <property type="entry name" value="PRK05231.1"/>
    <property type="match status" value="1"/>
</dbReference>
<dbReference type="NCBIfam" id="TIGR00938">
    <property type="entry name" value="thrB_alt"/>
    <property type="match status" value="1"/>
</dbReference>
<dbReference type="PANTHER" id="PTHR21064:SF6">
    <property type="entry name" value="AMINOGLYCOSIDE PHOSPHOTRANSFERASE DOMAIN-CONTAINING PROTEIN"/>
    <property type="match status" value="1"/>
</dbReference>
<dbReference type="PANTHER" id="PTHR21064">
    <property type="entry name" value="AMINOGLYCOSIDE PHOSPHOTRANSFERASE DOMAIN-CONTAINING PROTEIN-RELATED"/>
    <property type="match status" value="1"/>
</dbReference>
<dbReference type="Pfam" id="PF01636">
    <property type="entry name" value="APH"/>
    <property type="match status" value="1"/>
</dbReference>
<dbReference type="SUPFAM" id="SSF56112">
    <property type="entry name" value="Protein kinase-like (PK-like)"/>
    <property type="match status" value="1"/>
</dbReference>
<proteinExistence type="inferred from homology"/>
<sequence>MAVYTQVSDEALAGFLAGYDLGEALAFKGIAEGVENSNYYLETRKGRYILTLFEKRVNAADLPYFIGLKQHLSSKGYPCPEPVMGLDGQALRTLEDRPAVIVTFLDGLSPRRPTAKQCRSLGEGLARMHLALADFKGHRENALGPSSWRRMWDGRGADAEAIQPGLEAEVNACFERINAARAFSANLPRGTIHADLFPDNAFFLGEAFSGAIDFYFACTDALAYDLAVCLNSWAFEEGNATDASRLEYNFSKGSALIAGYQSVRPLEAAEREALPALCLGSAMRFFLTRLSDWSSTPAGALVKPKNPLEYAARLAFHRKIESAEGYGA</sequence>
<name>KHSE_HYPNA</name>
<evidence type="ECO:0000255" key="1">
    <source>
        <dbReference type="HAMAP-Rule" id="MF_00301"/>
    </source>
</evidence>
<feature type="chain" id="PRO_1000022582" description="Homoserine kinase">
    <location>
        <begin position="1"/>
        <end position="328"/>
    </location>
</feature>
<accession>Q0C3L9</accession>
<keyword id="KW-0028">Amino-acid biosynthesis</keyword>
<keyword id="KW-0067">ATP-binding</keyword>
<keyword id="KW-0418">Kinase</keyword>
<keyword id="KW-0547">Nucleotide-binding</keyword>
<keyword id="KW-1185">Reference proteome</keyword>
<keyword id="KW-0791">Threonine biosynthesis</keyword>
<keyword id="KW-0808">Transferase</keyword>
<gene>
    <name evidence="1" type="primary">thrB</name>
    <name type="ordered locus">HNE_0947</name>
</gene>